<protein>
    <recommendedName>
        <fullName evidence="1">Ribonuclease VapC7</fullName>
        <shortName evidence="1">RNase VapC7</shortName>
        <ecNumber evidence="1">3.1.-.-</ecNumber>
    </recommendedName>
    <alternativeName>
        <fullName evidence="1">Toxin VapC7</fullName>
    </alternativeName>
</protein>
<accession>P9WFB3</accession>
<accession>L0T644</accession>
<accession>O06778</accession>
<accession>Q7D9G8</accession>
<name>VAPC7_MYCTU</name>
<dbReference type="EC" id="3.1.-.-" evidence="1"/>
<dbReference type="EMBL" id="AL123456">
    <property type="protein sequence ID" value="CCP43404.1"/>
    <property type="molecule type" value="Genomic_DNA"/>
</dbReference>
<dbReference type="PIR" id="H70534">
    <property type="entry name" value="H70534"/>
</dbReference>
<dbReference type="RefSeq" id="NP_215175.1">
    <property type="nucleotide sequence ID" value="NC_000962.3"/>
</dbReference>
<dbReference type="RefSeq" id="WP_003403386.1">
    <property type="nucleotide sequence ID" value="NZ_NVQJ01000007.1"/>
</dbReference>
<dbReference type="SMR" id="P9WFB3"/>
<dbReference type="STRING" id="83332.Rv0661c"/>
<dbReference type="PaxDb" id="83332-Rv0661c"/>
<dbReference type="DNASU" id="888143"/>
<dbReference type="GeneID" id="888143"/>
<dbReference type="KEGG" id="mtu:Rv0661c"/>
<dbReference type="KEGG" id="mtv:RVBD_0661c"/>
<dbReference type="TubercuList" id="Rv0661c"/>
<dbReference type="eggNOG" id="COG1848">
    <property type="taxonomic scope" value="Bacteria"/>
</dbReference>
<dbReference type="InParanoid" id="P9WFB3"/>
<dbReference type="OrthoDB" id="4726629at2"/>
<dbReference type="Proteomes" id="UP000001584">
    <property type="component" value="Chromosome"/>
</dbReference>
<dbReference type="GO" id="GO:0000287">
    <property type="term" value="F:magnesium ion binding"/>
    <property type="evidence" value="ECO:0007669"/>
    <property type="project" value="UniProtKB-UniRule"/>
</dbReference>
<dbReference type="GO" id="GO:0004540">
    <property type="term" value="F:RNA nuclease activity"/>
    <property type="evidence" value="ECO:0007669"/>
    <property type="project" value="InterPro"/>
</dbReference>
<dbReference type="Gene3D" id="3.40.50.1010">
    <property type="entry name" value="5'-nuclease"/>
    <property type="match status" value="1"/>
</dbReference>
<dbReference type="HAMAP" id="MF_00265">
    <property type="entry name" value="VapC_Nob1"/>
    <property type="match status" value="1"/>
</dbReference>
<dbReference type="InterPro" id="IPR029060">
    <property type="entry name" value="PIN-like_dom_sf"/>
</dbReference>
<dbReference type="InterPro" id="IPR002716">
    <property type="entry name" value="PIN_dom"/>
</dbReference>
<dbReference type="InterPro" id="IPR052106">
    <property type="entry name" value="PINc/VapC_TA"/>
</dbReference>
<dbReference type="InterPro" id="IPR022907">
    <property type="entry name" value="VapC_family"/>
</dbReference>
<dbReference type="PANTHER" id="PTHR38826">
    <property type="entry name" value="RIBONUCLEASE VAPC13"/>
    <property type="match status" value="1"/>
</dbReference>
<dbReference type="PANTHER" id="PTHR38826:SF5">
    <property type="entry name" value="RIBONUCLEASE VAPC13"/>
    <property type="match status" value="1"/>
</dbReference>
<dbReference type="Pfam" id="PF01850">
    <property type="entry name" value="PIN"/>
    <property type="match status" value="1"/>
</dbReference>
<dbReference type="SUPFAM" id="SSF88723">
    <property type="entry name" value="PIN domain-like"/>
    <property type="match status" value="1"/>
</dbReference>
<proteinExistence type="inferred from homology"/>
<comment type="function">
    <text evidence="1">Toxic component of a type II toxin-antitoxin (TA) system. An RNase. The cognate antitoxin is VapB7 (By similarity).</text>
</comment>
<comment type="cofactor">
    <cofactor evidence="1">
        <name>Mg(2+)</name>
        <dbReference type="ChEBI" id="CHEBI:18420"/>
    </cofactor>
</comment>
<comment type="similarity">
    <text evidence="1">Belongs to the PINc/VapC protein family.</text>
</comment>
<organism>
    <name type="scientific">Mycobacterium tuberculosis (strain ATCC 25618 / H37Rv)</name>
    <dbReference type="NCBI Taxonomy" id="83332"/>
    <lineage>
        <taxon>Bacteria</taxon>
        <taxon>Bacillati</taxon>
        <taxon>Actinomycetota</taxon>
        <taxon>Actinomycetes</taxon>
        <taxon>Mycobacteriales</taxon>
        <taxon>Mycobacteriaceae</taxon>
        <taxon>Mycobacterium</taxon>
        <taxon>Mycobacterium tuberculosis complex</taxon>
    </lineage>
</organism>
<feature type="chain" id="PRO_0000407870" description="Ribonuclease VapC7">
    <location>
        <begin position="1"/>
        <end position="145"/>
    </location>
</feature>
<feature type="domain" description="PINc" evidence="1">
    <location>
        <begin position="2"/>
        <end position="129"/>
    </location>
</feature>
<feature type="binding site" evidence="1">
    <location>
        <position position="5"/>
    </location>
    <ligand>
        <name>Mg(2+)</name>
        <dbReference type="ChEBI" id="CHEBI:18420"/>
    </ligand>
</feature>
<feature type="binding site" evidence="1">
    <location>
        <position position="100"/>
    </location>
    <ligand>
        <name>Mg(2+)</name>
        <dbReference type="ChEBI" id="CHEBI:18420"/>
    </ligand>
</feature>
<keyword id="KW-0378">Hydrolase</keyword>
<keyword id="KW-0460">Magnesium</keyword>
<keyword id="KW-0479">Metal-binding</keyword>
<keyword id="KW-0540">Nuclease</keyword>
<keyword id="KW-1185">Reference proteome</keyword>
<keyword id="KW-1277">Toxin-antitoxin system</keyword>
<sequence>MIVLDTTVLVYAKGAEHPLRDPCRDLVAAIADERIAATTTAEVIQEFVHVRARRRDRSDAAALGRVTMPNCSRRYSPSIEATSKRGLTLFETTPGLEACDAVLAAVAASAGATALVSADPAFADLSDVVHVIPDAAGMVSLLGDR</sequence>
<evidence type="ECO:0000255" key="1">
    <source>
        <dbReference type="HAMAP-Rule" id="MF_00265"/>
    </source>
</evidence>
<reference key="1">
    <citation type="journal article" date="1998" name="Nature">
        <title>Deciphering the biology of Mycobacterium tuberculosis from the complete genome sequence.</title>
        <authorList>
            <person name="Cole S.T."/>
            <person name="Brosch R."/>
            <person name="Parkhill J."/>
            <person name="Garnier T."/>
            <person name="Churcher C.M."/>
            <person name="Harris D.E."/>
            <person name="Gordon S.V."/>
            <person name="Eiglmeier K."/>
            <person name="Gas S."/>
            <person name="Barry C.E. III"/>
            <person name="Tekaia F."/>
            <person name="Badcock K."/>
            <person name="Basham D."/>
            <person name="Brown D."/>
            <person name="Chillingworth T."/>
            <person name="Connor R."/>
            <person name="Davies R.M."/>
            <person name="Devlin K."/>
            <person name="Feltwell T."/>
            <person name="Gentles S."/>
            <person name="Hamlin N."/>
            <person name="Holroyd S."/>
            <person name="Hornsby T."/>
            <person name="Jagels K."/>
            <person name="Krogh A."/>
            <person name="McLean J."/>
            <person name="Moule S."/>
            <person name="Murphy L.D."/>
            <person name="Oliver S."/>
            <person name="Osborne J."/>
            <person name="Quail M.A."/>
            <person name="Rajandream M.A."/>
            <person name="Rogers J."/>
            <person name="Rutter S."/>
            <person name="Seeger K."/>
            <person name="Skelton S."/>
            <person name="Squares S."/>
            <person name="Squares R."/>
            <person name="Sulston J.E."/>
            <person name="Taylor K."/>
            <person name="Whitehead S."/>
            <person name="Barrell B.G."/>
        </authorList>
    </citation>
    <scope>NUCLEOTIDE SEQUENCE [LARGE SCALE GENOMIC DNA]</scope>
    <source>
        <strain>ATCC 25618 / H37Rv</strain>
    </source>
</reference>
<reference key="2">
    <citation type="journal article" date="2005" name="Nucleic Acids Res.">
        <title>Toxin-antitoxin loci are highly abundant in free-living but lost from host-associated prokaryotes.</title>
        <authorList>
            <person name="Pandey D.P."/>
            <person name="Gerdes K."/>
        </authorList>
    </citation>
    <scope>POSSIBLE FUNCTION</scope>
    <source>
        <strain>ATCC 25618 / H37Rv</strain>
    </source>
</reference>
<gene>
    <name evidence="1" type="primary">vapC7</name>
    <name type="ordered locus">Rv0661c</name>
</gene>